<dbReference type="EMBL" id="AE005674">
    <property type="protein sequence ID" value="AAN43321.2"/>
    <property type="molecule type" value="Genomic_DNA"/>
</dbReference>
<dbReference type="EMBL" id="AE014073">
    <property type="protein sequence ID" value="AAP17207.1"/>
    <property type="molecule type" value="Genomic_DNA"/>
</dbReference>
<dbReference type="RefSeq" id="NP_707614.2">
    <property type="nucleotide sequence ID" value="NC_004337.2"/>
</dbReference>
<dbReference type="RefSeq" id="WP_000045648.1">
    <property type="nucleotide sequence ID" value="NZ_WPGW01000120.1"/>
</dbReference>
<dbReference type="SMR" id="P0AEK9"/>
<dbReference type="STRING" id="198214.SF1749"/>
<dbReference type="PaxDb" id="198214-SF1749"/>
<dbReference type="GeneID" id="1024930"/>
<dbReference type="GeneID" id="93775635"/>
<dbReference type="KEGG" id="sfl:SF1749"/>
<dbReference type="KEGG" id="sfx:S1882"/>
<dbReference type="PATRIC" id="fig|198214.7.peg.2072"/>
<dbReference type="HOGENOM" id="CLU_091368_1_1_6"/>
<dbReference type="Proteomes" id="UP000001006">
    <property type="component" value="Chromosome"/>
</dbReference>
<dbReference type="Proteomes" id="UP000002673">
    <property type="component" value="Chromosome"/>
</dbReference>
<dbReference type="GO" id="GO:0009326">
    <property type="term" value="C:formate dehydrogenase complex"/>
    <property type="evidence" value="ECO:0007669"/>
    <property type="project" value="InterPro"/>
</dbReference>
<dbReference type="GO" id="GO:0005886">
    <property type="term" value="C:plasma membrane"/>
    <property type="evidence" value="ECO:0007669"/>
    <property type="project" value="UniProtKB-SubCell"/>
</dbReference>
<dbReference type="GO" id="GO:0009055">
    <property type="term" value="F:electron transfer activity"/>
    <property type="evidence" value="ECO:0007669"/>
    <property type="project" value="InterPro"/>
</dbReference>
<dbReference type="GO" id="GO:0008863">
    <property type="term" value="F:formate dehydrogenase (NAD+) activity"/>
    <property type="evidence" value="ECO:0007669"/>
    <property type="project" value="InterPro"/>
</dbReference>
<dbReference type="GO" id="GO:0036397">
    <property type="term" value="F:formate dehydrogenase (quinone) activity"/>
    <property type="evidence" value="ECO:0007669"/>
    <property type="project" value="TreeGrafter"/>
</dbReference>
<dbReference type="GO" id="GO:0046872">
    <property type="term" value="F:metal ion binding"/>
    <property type="evidence" value="ECO:0007669"/>
    <property type="project" value="UniProtKB-KW"/>
</dbReference>
<dbReference type="GO" id="GO:0009061">
    <property type="term" value="P:anaerobic respiration"/>
    <property type="evidence" value="ECO:0007669"/>
    <property type="project" value="TreeGrafter"/>
</dbReference>
<dbReference type="GO" id="GO:0015944">
    <property type="term" value="P:formate oxidation"/>
    <property type="evidence" value="ECO:0007669"/>
    <property type="project" value="TreeGrafter"/>
</dbReference>
<dbReference type="GO" id="GO:0022904">
    <property type="term" value="P:respiratory electron transport chain"/>
    <property type="evidence" value="ECO:0007669"/>
    <property type="project" value="InterPro"/>
</dbReference>
<dbReference type="FunFam" id="1.20.950.20:FF:000002">
    <property type="entry name" value="Formate dehydrogenase cytochrome b556 subunit"/>
    <property type="match status" value="1"/>
</dbReference>
<dbReference type="Gene3D" id="1.20.950.20">
    <property type="entry name" value="Transmembrane di-heme cytochromes, Chain C"/>
    <property type="match status" value="1"/>
</dbReference>
<dbReference type="InterPro" id="IPR011577">
    <property type="entry name" value="Cyt_b561_bac/Ni-Hgenase"/>
</dbReference>
<dbReference type="InterPro" id="IPR016174">
    <property type="entry name" value="Di-haem_cyt_TM"/>
</dbReference>
<dbReference type="InterPro" id="IPR051817">
    <property type="entry name" value="FDH_cytochrome_b556_subunit"/>
</dbReference>
<dbReference type="InterPro" id="IPR006471">
    <property type="entry name" value="Formate_DH_gsu"/>
</dbReference>
<dbReference type="NCBIfam" id="TIGR01583">
    <property type="entry name" value="formate-DH-gamm"/>
    <property type="match status" value="1"/>
</dbReference>
<dbReference type="NCBIfam" id="NF007558">
    <property type="entry name" value="PRK10179.1"/>
    <property type="match status" value="1"/>
</dbReference>
<dbReference type="PANTHER" id="PTHR30074">
    <property type="entry name" value="FORMATE DEHYDROGENASE, NITRATE-INDUCIBLE, CYTOCHROME B556 FDN SUBUNIT"/>
    <property type="match status" value="1"/>
</dbReference>
<dbReference type="PANTHER" id="PTHR30074:SF5">
    <property type="entry name" value="FORMATE DEHYDROGENASE, NITRATE-INDUCIBLE, CYTOCHROME B556(FDN) SUBUNIT"/>
    <property type="match status" value="1"/>
</dbReference>
<dbReference type="Pfam" id="PF01292">
    <property type="entry name" value="Ni_hydr_CYTB"/>
    <property type="match status" value="1"/>
</dbReference>
<dbReference type="SUPFAM" id="SSF81342">
    <property type="entry name" value="Transmembrane di-heme cytochromes"/>
    <property type="match status" value="1"/>
</dbReference>
<keyword id="KW-0997">Cell inner membrane</keyword>
<keyword id="KW-1003">Cell membrane</keyword>
<keyword id="KW-0249">Electron transport</keyword>
<keyword id="KW-0349">Heme</keyword>
<keyword id="KW-0408">Iron</keyword>
<keyword id="KW-0472">Membrane</keyword>
<keyword id="KW-0479">Metal-binding</keyword>
<keyword id="KW-1185">Reference proteome</keyword>
<keyword id="KW-0812">Transmembrane</keyword>
<keyword id="KW-1133">Transmembrane helix</keyword>
<keyword id="KW-0813">Transport</keyword>
<evidence type="ECO:0000250" key="1"/>
<evidence type="ECO:0000305" key="2"/>
<accession>P0AEK9</accession>
<accession>P24185</accession>
<accession>P77513</accession>
<feature type="chain" id="PRO_0000087212" description="Formate dehydrogenase, nitrate-inducible, cytochrome b556(Fdn) subunit">
    <location>
        <begin position="1"/>
        <end position="217"/>
    </location>
</feature>
<feature type="topological domain" description="Cytoplasmic" evidence="1">
    <location>
        <begin position="1"/>
        <end position="11"/>
    </location>
</feature>
<feature type="transmembrane region" description="Helical" evidence="1">
    <location>
        <begin position="12"/>
        <end position="36"/>
    </location>
</feature>
<feature type="topological domain" description="Periplasmic" evidence="1">
    <location>
        <begin position="37"/>
        <end position="52"/>
    </location>
</feature>
<feature type="transmembrane region" description="Helical" evidence="1">
    <location>
        <begin position="53"/>
        <end position="74"/>
    </location>
</feature>
<feature type="topological domain" description="Cytoplasmic" evidence="1">
    <location>
        <begin position="75"/>
        <end position="110"/>
    </location>
</feature>
<feature type="transmembrane region" description="Helical" evidence="1">
    <location>
        <begin position="111"/>
        <end position="134"/>
    </location>
</feature>
<feature type="topological domain" description="Periplasmic" evidence="1">
    <location>
        <begin position="135"/>
        <end position="150"/>
    </location>
</feature>
<feature type="transmembrane region" description="Helical" evidence="1">
    <location>
        <begin position="151"/>
        <end position="175"/>
    </location>
</feature>
<feature type="topological domain" description="Cytoplasmic" evidence="1">
    <location>
        <begin position="176"/>
        <end position="217"/>
    </location>
</feature>
<feature type="binding site" description="axial binding residue" evidence="1">
    <location>
        <position position="18"/>
    </location>
    <ligand>
        <name>heme b</name>
        <dbReference type="ChEBI" id="CHEBI:60344"/>
        <label>1</label>
    </ligand>
    <ligandPart>
        <name>Fe</name>
        <dbReference type="ChEBI" id="CHEBI:18248"/>
    </ligandPart>
</feature>
<feature type="binding site" description="axial binding residue" evidence="1">
    <location>
        <position position="57"/>
    </location>
    <ligand>
        <name>heme b</name>
        <dbReference type="ChEBI" id="CHEBI:60344"/>
        <label>2</label>
    </ligand>
    <ligandPart>
        <name>Fe</name>
        <dbReference type="ChEBI" id="CHEBI:18248"/>
    </ligandPart>
</feature>
<feature type="binding site" description="axial binding residue" evidence="1">
    <location>
        <position position="155"/>
    </location>
    <ligand>
        <name>heme b</name>
        <dbReference type="ChEBI" id="CHEBI:60344"/>
        <label>2</label>
    </ligand>
    <ligandPart>
        <name>Fe</name>
        <dbReference type="ChEBI" id="CHEBI:18248"/>
    </ligandPart>
</feature>
<feature type="binding site" evidence="1">
    <location>
        <position position="169"/>
    </location>
    <ligand>
        <name>a menaquinone</name>
        <dbReference type="ChEBI" id="CHEBI:16374"/>
    </ligand>
</feature>
<feature type="binding site" description="axial binding residue" evidence="1">
    <location>
        <position position="169"/>
    </location>
    <ligand>
        <name>heme b</name>
        <dbReference type="ChEBI" id="CHEBI:60344"/>
        <label>1</label>
    </ligand>
    <ligandPart>
        <name>Fe</name>
        <dbReference type="ChEBI" id="CHEBI:18248"/>
    </ligandPart>
</feature>
<reference key="1">
    <citation type="journal article" date="2002" name="Nucleic Acids Res.">
        <title>Genome sequence of Shigella flexneri 2a: insights into pathogenicity through comparison with genomes of Escherichia coli K12 and O157.</title>
        <authorList>
            <person name="Jin Q."/>
            <person name="Yuan Z."/>
            <person name="Xu J."/>
            <person name="Wang Y."/>
            <person name="Shen Y."/>
            <person name="Lu W."/>
            <person name="Wang J."/>
            <person name="Liu H."/>
            <person name="Yang J."/>
            <person name="Yang F."/>
            <person name="Zhang X."/>
            <person name="Zhang J."/>
            <person name="Yang G."/>
            <person name="Wu H."/>
            <person name="Qu D."/>
            <person name="Dong J."/>
            <person name="Sun L."/>
            <person name="Xue Y."/>
            <person name="Zhao A."/>
            <person name="Gao Y."/>
            <person name="Zhu J."/>
            <person name="Kan B."/>
            <person name="Ding K."/>
            <person name="Chen S."/>
            <person name="Cheng H."/>
            <person name="Yao Z."/>
            <person name="He B."/>
            <person name="Chen R."/>
            <person name="Ma D."/>
            <person name="Qiang B."/>
            <person name="Wen Y."/>
            <person name="Hou Y."/>
            <person name="Yu J."/>
        </authorList>
    </citation>
    <scope>NUCLEOTIDE SEQUENCE [LARGE SCALE GENOMIC DNA]</scope>
    <source>
        <strain>301 / Serotype 2a</strain>
    </source>
</reference>
<reference key="2">
    <citation type="journal article" date="2003" name="Infect. Immun.">
        <title>Complete genome sequence and comparative genomics of Shigella flexneri serotype 2a strain 2457T.</title>
        <authorList>
            <person name="Wei J."/>
            <person name="Goldberg M.B."/>
            <person name="Burland V."/>
            <person name="Venkatesan M.M."/>
            <person name="Deng W."/>
            <person name="Fournier G."/>
            <person name="Mayhew G.F."/>
            <person name="Plunkett G. III"/>
            <person name="Rose D.J."/>
            <person name="Darling A."/>
            <person name="Mau B."/>
            <person name="Perna N.T."/>
            <person name="Payne S.M."/>
            <person name="Runyen-Janecky L.J."/>
            <person name="Zhou S."/>
            <person name="Schwartz D.C."/>
            <person name="Blattner F.R."/>
        </authorList>
    </citation>
    <scope>NUCLEOTIDE SEQUENCE [LARGE SCALE GENOMIC DNA]</scope>
    <source>
        <strain>ATCC 700930 / 2457T / Serotype 2a</strain>
    </source>
</reference>
<gene>
    <name type="primary">fdnI</name>
    <name type="ordered locus">SF1749</name>
    <name type="ordered locus">S1882</name>
</gene>
<sequence>MSKSKMIVRTKFIDRACHWTVVICFFLVALSGISFFFPTLQWLTQTFGTPQMGRILHPFFGIAIFVALMFMFVRFVHHNIPDKKDIPWLLNIVEVLKGNEHKVADVGKYNAGQKMMFWSIMSMIFVLLVTGVIIWRPYFAQYFPMQVVRYSLLIHAAAGIILIHAILIHMYMAFWVKGSIKGMIEGKVSRRWAKKHHPRWYREIEKAEAKKESEEGI</sequence>
<protein>
    <recommendedName>
        <fullName>Formate dehydrogenase, nitrate-inducible, cytochrome b556(Fdn) subunit</fullName>
    </recommendedName>
    <alternativeName>
        <fullName>Anaerobic formate dehydrogenase cytochrome b556 subunit</fullName>
    </alternativeName>
    <alternativeName>
        <fullName>Formate dehydrogenase-N subunit gamma</fullName>
        <shortName>FDH-N subunit gamma</shortName>
    </alternativeName>
</protein>
<name>FDNI_SHIFL</name>
<proteinExistence type="inferred from homology"/>
<comment type="function">
    <text evidence="1">Formate dehydrogenase allows the bacterium to use formate as major electron donor during anaerobic respiration, when nitrate is used as electron acceptor. Subunit gamma is the cytochrome b556 component of the formate dehydrogenase-N, and also contains a menaquinone reduction site that receives electrons from the beta subunit (FdnH), through its hemes. Formate dehydrogenase-N is part of a system that generates proton motive force, together with the dissimilatory nitrate reductase (Nar) (By similarity).</text>
</comment>
<comment type="cofactor">
    <cofactor evidence="1">
        <name>heme</name>
        <dbReference type="ChEBI" id="CHEBI:30413"/>
    </cofactor>
    <text evidence="1">Binds 2 heme groups per subunit. Heme 1 is located at the cytoplasmic interface, heme 2 is located at the periplasmic interface. Electrons are transferred from the periplasmic to the cytoplasmic heme.</text>
</comment>
<comment type="subunit">
    <text evidence="1">Trimer of heterotrimers, consisting of subunits alpha, beta and gamma.</text>
</comment>
<comment type="subcellular location">
    <subcellularLocation>
        <location evidence="1">Cell inner membrane</location>
        <topology evidence="1">Multi-pass membrane protein</topology>
    </subcellularLocation>
</comment>
<comment type="similarity">
    <text evidence="2">Belongs to the formate dehydrogenase gamma subunit family.</text>
</comment>
<organism>
    <name type="scientific">Shigella flexneri</name>
    <dbReference type="NCBI Taxonomy" id="623"/>
    <lineage>
        <taxon>Bacteria</taxon>
        <taxon>Pseudomonadati</taxon>
        <taxon>Pseudomonadota</taxon>
        <taxon>Gammaproteobacteria</taxon>
        <taxon>Enterobacterales</taxon>
        <taxon>Enterobacteriaceae</taxon>
        <taxon>Shigella</taxon>
    </lineage>
</organism>